<reference key="1">
    <citation type="journal article" date="2002" name="Nature">
        <title>Comparison of the genomes of two Xanthomonas pathogens with differing host specificities.</title>
        <authorList>
            <person name="da Silva A.C.R."/>
            <person name="Ferro J.A."/>
            <person name="Reinach F.C."/>
            <person name="Farah C.S."/>
            <person name="Furlan L.R."/>
            <person name="Quaggio R.B."/>
            <person name="Monteiro-Vitorello C.B."/>
            <person name="Van Sluys M.A."/>
            <person name="Almeida N.F. Jr."/>
            <person name="Alves L.M.C."/>
            <person name="do Amaral A.M."/>
            <person name="Bertolini M.C."/>
            <person name="Camargo L.E.A."/>
            <person name="Camarotte G."/>
            <person name="Cannavan F."/>
            <person name="Cardozo J."/>
            <person name="Chambergo F."/>
            <person name="Ciapina L.P."/>
            <person name="Cicarelli R.M.B."/>
            <person name="Coutinho L.L."/>
            <person name="Cursino-Santos J.R."/>
            <person name="El-Dorry H."/>
            <person name="Faria J.B."/>
            <person name="Ferreira A.J.S."/>
            <person name="Ferreira R.C.C."/>
            <person name="Ferro M.I.T."/>
            <person name="Formighieri E.F."/>
            <person name="Franco M.C."/>
            <person name="Greggio C.C."/>
            <person name="Gruber A."/>
            <person name="Katsuyama A.M."/>
            <person name="Kishi L.T."/>
            <person name="Leite R.P."/>
            <person name="Lemos E.G.M."/>
            <person name="Lemos M.V.F."/>
            <person name="Locali E.C."/>
            <person name="Machado M.A."/>
            <person name="Madeira A.M.B.N."/>
            <person name="Martinez-Rossi N.M."/>
            <person name="Martins E.C."/>
            <person name="Meidanis J."/>
            <person name="Menck C.F.M."/>
            <person name="Miyaki C.Y."/>
            <person name="Moon D.H."/>
            <person name="Moreira L.M."/>
            <person name="Novo M.T.M."/>
            <person name="Okura V.K."/>
            <person name="Oliveira M.C."/>
            <person name="Oliveira V.R."/>
            <person name="Pereira H.A."/>
            <person name="Rossi A."/>
            <person name="Sena J.A.D."/>
            <person name="Silva C."/>
            <person name="de Souza R.F."/>
            <person name="Spinola L.A.F."/>
            <person name="Takita M.A."/>
            <person name="Tamura R.E."/>
            <person name="Teixeira E.C."/>
            <person name="Tezza R.I.D."/>
            <person name="Trindade dos Santos M."/>
            <person name="Truffi D."/>
            <person name="Tsai S.M."/>
            <person name="White F.F."/>
            <person name="Setubal J.C."/>
            <person name="Kitajima J.P."/>
        </authorList>
    </citation>
    <scope>NUCLEOTIDE SEQUENCE [LARGE SCALE GENOMIC DNA]</scope>
    <source>
        <strain>306</strain>
    </source>
</reference>
<gene>
    <name evidence="1" type="primary">purT</name>
    <name type="ordered locus">XAC1237</name>
</gene>
<dbReference type="EC" id="6.3.1.21" evidence="1"/>
<dbReference type="EMBL" id="AE008923">
    <property type="protein sequence ID" value="AAM36109.1"/>
    <property type="molecule type" value="Genomic_DNA"/>
</dbReference>
<dbReference type="RefSeq" id="WP_011050795.1">
    <property type="nucleotide sequence ID" value="NC_003919.1"/>
</dbReference>
<dbReference type="SMR" id="Q8PN36"/>
<dbReference type="GeneID" id="66910407"/>
<dbReference type="KEGG" id="xac:XAC1237"/>
<dbReference type="eggNOG" id="COG0027">
    <property type="taxonomic scope" value="Bacteria"/>
</dbReference>
<dbReference type="HOGENOM" id="CLU_011534_1_3_6"/>
<dbReference type="UniPathway" id="UPA00074">
    <property type="reaction ID" value="UER00127"/>
</dbReference>
<dbReference type="Proteomes" id="UP000000576">
    <property type="component" value="Chromosome"/>
</dbReference>
<dbReference type="GO" id="GO:0005829">
    <property type="term" value="C:cytosol"/>
    <property type="evidence" value="ECO:0007669"/>
    <property type="project" value="TreeGrafter"/>
</dbReference>
<dbReference type="GO" id="GO:0005524">
    <property type="term" value="F:ATP binding"/>
    <property type="evidence" value="ECO:0007669"/>
    <property type="project" value="UniProtKB-UniRule"/>
</dbReference>
<dbReference type="GO" id="GO:0000287">
    <property type="term" value="F:magnesium ion binding"/>
    <property type="evidence" value="ECO:0007669"/>
    <property type="project" value="InterPro"/>
</dbReference>
<dbReference type="GO" id="GO:0043815">
    <property type="term" value="F:phosphoribosylglycinamide formyltransferase 2 activity"/>
    <property type="evidence" value="ECO:0007669"/>
    <property type="project" value="UniProtKB-UniRule"/>
</dbReference>
<dbReference type="GO" id="GO:0004644">
    <property type="term" value="F:phosphoribosylglycinamide formyltransferase activity"/>
    <property type="evidence" value="ECO:0007669"/>
    <property type="project" value="InterPro"/>
</dbReference>
<dbReference type="GO" id="GO:0006189">
    <property type="term" value="P:'de novo' IMP biosynthetic process"/>
    <property type="evidence" value="ECO:0007669"/>
    <property type="project" value="UniProtKB-UniRule"/>
</dbReference>
<dbReference type="FunFam" id="3.30.1490.20:FF:000013">
    <property type="entry name" value="Formate-dependent phosphoribosylglycinamide formyltransferase"/>
    <property type="match status" value="1"/>
</dbReference>
<dbReference type="FunFam" id="3.30.470.20:FF:000027">
    <property type="entry name" value="Formate-dependent phosphoribosylglycinamide formyltransferase"/>
    <property type="match status" value="1"/>
</dbReference>
<dbReference type="FunFam" id="3.40.50.20:FF:000007">
    <property type="entry name" value="Formate-dependent phosphoribosylglycinamide formyltransferase"/>
    <property type="match status" value="1"/>
</dbReference>
<dbReference type="Gene3D" id="3.40.50.20">
    <property type="match status" value="1"/>
</dbReference>
<dbReference type="Gene3D" id="3.30.1490.20">
    <property type="entry name" value="ATP-grasp fold, A domain"/>
    <property type="match status" value="1"/>
</dbReference>
<dbReference type="Gene3D" id="3.30.470.20">
    <property type="entry name" value="ATP-grasp fold, B domain"/>
    <property type="match status" value="1"/>
</dbReference>
<dbReference type="HAMAP" id="MF_01643">
    <property type="entry name" value="PurT"/>
    <property type="match status" value="1"/>
</dbReference>
<dbReference type="InterPro" id="IPR011761">
    <property type="entry name" value="ATP-grasp"/>
</dbReference>
<dbReference type="InterPro" id="IPR003135">
    <property type="entry name" value="ATP-grasp_carboxylate-amine"/>
</dbReference>
<dbReference type="InterPro" id="IPR013815">
    <property type="entry name" value="ATP_grasp_subdomain_1"/>
</dbReference>
<dbReference type="InterPro" id="IPR016185">
    <property type="entry name" value="PreATP-grasp_dom_sf"/>
</dbReference>
<dbReference type="InterPro" id="IPR005862">
    <property type="entry name" value="PurT"/>
</dbReference>
<dbReference type="InterPro" id="IPR054350">
    <property type="entry name" value="PurT/PurK_preATP-grasp"/>
</dbReference>
<dbReference type="InterPro" id="IPR048740">
    <property type="entry name" value="PurT_C"/>
</dbReference>
<dbReference type="InterPro" id="IPR011054">
    <property type="entry name" value="Rudment_hybrid_motif"/>
</dbReference>
<dbReference type="NCBIfam" id="NF006766">
    <property type="entry name" value="PRK09288.1"/>
    <property type="match status" value="1"/>
</dbReference>
<dbReference type="NCBIfam" id="TIGR01142">
    <property type="entry name" value="purT"/>
    <property type="match status" value="1"/>
</dbReference>
<dbReference type="PANTHER" id="PTHR43055">
    <property type="entry name" value="FORMATE-DEPENDENT PHOSPHORIBOSYLGLYCINAMIDE FORMYLTRANSFERASE"/>
    <property type="match status" value="1"/>
</dbReference>
<dbReference type="PANTHER" id="PTHR43055:SF1">
    <property type="entry name" value="FORMATE-DEPENDENT PHOSPHORIBOSYLGLYCINAMIDE FORMYLTRANSFERASE"/>
    <property type="match status" value="1"/>
</dbReference>
<dbReference type="Pfam" id="PF02222">
    <property type="entry name" value="ATP-grasp"/>
    <property type="match status" value="1"/>
</dbReference>
<dbReference type="Pfam" id="PF21244">
    <property type="entry name" value="PurT_C"/>
    <property type="match status" value="1"/>
</dbReference>
<dbReference type="Pfam" id="PF22660">
    <property type="entry name" value="RS_preATP-grasp-like"/>
    <property type="match status" value="1"/>
</dbReference>
<dbReference type="SUPFAM" id="SSF56059">
    <property type="entry name" value="Glutathione synthetase ATP-binding domain-like"/>
    <property type="match status" value="1"/>
</dbReference>
<dbReference type="SUPFAM" id="SSF52440">
    <property type="entry name" value="PreATP-grasp domain"/>
    <property type="match status" value="1"/>
</dbReference>
<dbReference type="SUPFAM" id="SSF51246">
    <property type="entry name" value="Rudiment single hybrid motif"/>
    <property type="match status" value="1"/>
</dbReference>
<dbReference type="PROSITE" id="PS50975">
    <property type="entry name" value="ATP_GRASP"/>
    <property type="match status" value="1"/>
</dbReference>
<sequence>MTTLGTPLSPSATRVLLLGSGELGKEVAIELQRFGVEVIAADRYANAPAMQVAHRSHVLDMLDPIALRTLIANERPHLIVPEIEAIHTEALVALEREQGQKVIPTARAARLTMDREGIRRLAAETLGLPTSPYRFVDTVEEYRDAIAAVGLPCVVKPVMSSSGKGQSTLRSEADIDAAWEYAQTGGRAGAGRCIVEGFIDFDYEITLLTVRHAGGTSYCDPIGHWQQDGDYRESWQPQPMSAAALRRSQQIAKAITDDLGGRGLFGVELFVKGDEVWFSEVSPRPHDTGLVTLVSQELSEFALHARAILGLPVGAQDGGVIRQAGPSASCALLAHGNGVPAFDNVAEALRDPDTALRLFGKPRVDGHRRVGVTLARADSVDAAREKARVAAAALTIQLQA</sequence>
<comment type="function">
    <text evidence="1">Involved in the de novo purine biosynthesis. Catalyzes the transfer of formate to 5-phospho-ribosyl-glycinamide (GAR), producing 5-phospho-ribosyl-N-formylglycinamide (FGAR). Formate is provided by PurU via hydrolysis of 10-formyl-tetrahydrofolate.</text>
</comment>
<comment type="catalytic activity">
    <reaction evidence="1">
        <text>N(1)-(5-phospho-beta-D-ribosyl)glycinamide + formate + ATP = N(2)-formyl-N(1)-(5-phospho-beta-D-ribosyl)glycinamide + ADP + phosphate + H(+)</text>
        <dbReference type="Rhea" id="RHEA:24829"/>
        <dbReference type="ChEBI" id="CHEBI:15378"/>
        <dbReference type="ChEBI" id="CHEBI:15740"/>
        <dbReference type="ChEBI" id="CHEBI:30616"/>
        <dbReference type="ChEBI" id="CHEBI:43474"/>
        <dbReference type="ChEBI" id="CHEBI:143788"/>
        <dbReference type="ChEBI" id="CHEBI:147286"/>
        <dbReference type="ChEBI" id="CHEBI:456216"/>
        <dbReference type="EC" id="6.3.1.21"/>
    </reaction>
    <physiologicalReaction direction="left-to-right" evidence="1">
        <dbReference type="Rhea" id="RHEA:24830"/>
    </physiologicalReaction>
</comment>
<comment type="pathway">
    <text evidence="1">Purine metabolism; IMP biosynthesis via de novo pathway; N(2)-formyl-N(1)-(5-phospho-D-ribosyl)glycinamide from N(1)-(5-phospho-D-ribosyl)glycinamide (formate route): step 1/1.</text>
</comment>
<comment type="subunit">
    <text evidence="1">Homodimer.</text>
</comment>
<comment type="similarity">
    <text evidence="1">Belongs to the PurK/PurT family.</text>
</comment>
<protein>
    <recommendedName>
        <fullName evidence="1">Formate-dependent phosphoribosylglycinamide formyltransferase</fullName>
        <ecNumber evidence="1">6.3.1.21</ecNumber>
    </recommendedName>
    <alternativeName>
        <fullName evidence="1">5'-phosphoribosylglycinamide transformylase 2</fullName>
    </alternativeName>
    <alternativeName>
        <fullName evidence="1">Formate-dependent GAR transformylase</fullName>
    </alternativeName>
    <alternativeName>
        <fullName evidence="1">GAR transformylase 2</fullName>
        <shortName evidence="1">GART 2</shortName>
    </alternativeName>
    <alternativeName>
        <fullName evidence="1">Non-folate glycinamide ribonucleotide transformylase</fullName>
    </alternativeName>
    <alternativeName>
        <fullName evidence="1">Phosphoribosylglycinamide formyltransferase 2</fullName>
    </alternativeName>
</protein>
<accession>Q8PN36</accession>
<organism>
    <name type="scientific">Xanthomonas axonopodis pv. citri (strain 306)</name>
    <dbReference type="NCBI Taxonomy" id="190486"/>
    <lineage>
        <taxon>Bacteria</taxon>
        <taxon>Pseudomonadati</taxon>
        <taxon>Pseudomonadota</taxon>
        <taxon>Gammaproteobacteria</taxon>
        <taxon>Lysobacterales</taxon>
        <taxon>Lysobacteraceae</taxon>
        <taxon>Xanthomonas</taxon>
    </lineage>
</organism>
<evidence type="ECO:0000255" key="1">
    <source>
        <dbReference type="HAMAP-Rule" id="MF_01643"/>
    </source>
</evidence>
<proteinExistence type="inferred from homology"/>
<name>PURT_XANAC</name>
<keyword id="KW-0067">ATP-binding</keyword>
<keyword id="KW-0436">Ligase</keyword>
<keyword id="KW-0460">Magnesium</keyword>
<keyword id="KW-0479">Metal-binding</keyword>
<keyword id="KW-0547">Nucleotide-binding</keyword>
<keyword id="KW-0658">Purine biosynthesis</keyword>
<feature type="chain" id="PRO_0000319264" description="Formate-dependent phosphoribosylglycinamide formyltransferase">
    <location>
        <begin position="1"/>
        <end position="400"/>
    </location>
</feature>
<feature type="domain" description="ATP-grasp" evidence="1">
    <location>
        <begin position="120"/>
        <end position="309"/>
    </location>
</feature>
<feature type="binding site" evidence="1">
    <location>
        <begin position="22"/>
        <end position="23"/>
    </location>
    <ligand>
        <name>N(1)-(5-phospho-beta-D-ribosyl)glycinamide</name>
        <dbReference type="ChEBI" id="CHEBI:143788"/>
    </ligand>
</feature>
<feature type="binding site" evidence="1">
    <location>
        <position position="82"/>
    </location>
    <ligand>
        <name>N(1)-(5-phospho-beta-D-ribosyl)glycinamide</name>
        <dbReference type="ChEBI" id="CHEBI:143788"/>
    </ligand>
</feature>
<feature type="binding site" evidence="1">
    <location>
        <position position="115"/>
    </location>
    <ligand>
        <name>ATP</name>
        <dbReference type="ChEBI" id="CHEBI:30616"/>
    </ligand>
</feature>
<feature type="binding site" evidence="1">
    <location>
        <position position="156"/>
    </location>
    <ligand>
        <name>ATP</name>
        <dbReference type="ChEBI" id="CHEBI:30616"/>
    </ligand>
</feature>
<feature type="binding site" evidence="1">
    <location>
        <begin position="161"/>
        <end position="166"/>
    </location>
    <ligand>
        <name>ATP</name>
        <dbReference type="ChEBI" id="CHEBI:30616"/>
    </ligand>
</feature>
<feature type="binding site" evidence="1">
    <location>
        <begin position="196"/>
        <end position="199"/>
    </location>
    <ligand>
        <name>ATP</name>
        <dbReference type="ChEBI" id="CHEBI:30616"/>
    </ligand>
</feature>
<feature type="binding site" evidence="1">
    <location>
        <position position="204"/>
    </location>
    <ligand>
        <name>ATP</name>
        <dbReference type="ChEBI" id="CHEBI:30616"/>
    </ligand>
</feature>
<feature type="binding site" evidence="1">
    <location>
        <position position="268"/>
    </location>
    <ligand>
        <name>Mg(2+)</name>
        <dbReference type="ChEBI" id="CHEBI:18420"/>
    </ligand>
</feature>
<feature type="binding site" evidence="1">
    <location>
        <position position="280"/>
    </location>
    <ligand>
        <name>Mg(2+)</name>
        <dbReference type="ChEBI" id="CHEBI:18420"/>
    </ligand>
</feature>
<feature type="binding site" evidence="1">
    <location>
        <position position="287"/>
    </location>
    <ligand>
        <name>N(1)-(5-phospho-beta-D-ribosyl)glycinamide</name>
        <dbReference type="ChEBI" id="CHEBI:143788"/>
    </ligand>
</feature>
<feature type="binding site" evidence="1">
    <location>
        <position position="361"/>
    </location>
    <ligand>
        <name>N(1)-(5-phospho-beta-D-ribosyl)glycinamide</name>
        <dbReference type="ChEBI" id="CHEBI:143788"/>
    </ligand>
</feature>
<feature type="binding site" evidence="1">
    <location>
        <begin position="368"/>
        <end position="369"/>
    </location>
    <ligand>
        <name>N(1)-(5-phospho-beta-D-ribosyl)glycinamide</name>
        <dbReference type="ChEBI" id="CHEBI:143788"/>
    </ligand>
</feature>